<organism>
    <name type="scientific">Escherichia coli (strain K12)</name>
    <dbReference type="NCBI Taxonomy" id="83333"/>
    <lineage>
        <taxon>Bacteria</taxon>
        <taxon>Pseudomonadati</taxon>
        <taxon>Pseudomonadota</taxon>
        <taxon>Gammaproteobacteria</taxon>
        <taxon>Enterobacterales</taxon>
        <taxon>Enterobacteriaceae</taxon>
        <taxon>Escherichia</taxon>
    </lineage>
</organism>
<gene>
    <name type="primary">yjdN</name>
    <name evidence="2" type="synonym">phnB</name>
    <name type="ordered locus">b4107</name>
    <name type="ordered locus">JW4068</name>
</gene>
<dbReference type="EMBL" id="J05260">
    <property type="protein sequence ID" value="AAA24338.1"/>
    <property type="molecule type" value="Genomic_DNA"/>
</dbReference>
<dbReference type="EMBL" id="U14003">
    <property type="protein sequence ID" value="AAA97006.1"/>
    <property type="molecule type" value="Genomic_DNA"/>
</dbReference>
<dbReference type="EMBL" id="U00096">
    <property type="protein sequence ID" value="AAC77068.1"/>
    <property type="molecule type" value="Genomic_DNA"/>
</dbReference>
<dbReference type="EMBL" id="AP009048">
    <property type="protein sequence ID" value="BAE78109.1"/>
    <property type="molecule type" value="Genomic_DNA"/>
</dbReference>
<dbReference type="PIR" id="C35718">
    <property type="entry name" value="C35718"/>
</dbReference>
<dbReference type="RefSeq" id="NP_418531.1">
    <property type="nucleotide sequence ID" value="NC_000913.3"/>
</dbReference>
<dbReference type="RefSeq" id="WP_001131339.1">
    <property type="nucleotide sequence ID" value="NZ_SSZK01000016.1"/>
</dbReference>
<dbReference type="SMR" id="P16681"/>
<dbReference type="BioGRID" id="4263089">
    <property type="interactions" value="14"/>
</dbReference>
<dbReference type="FunCoup" id="P16681">
    <property type="interactions" value="259"/>
</dbReference>
<dbReference type="IntAct" id="P16681">
    <property type="interactions" value="1"/>
</dbReference>
<dbReference type="STRING" id="511145.b4107"/>
<dbReference type="jPOST" id="P16681"/>
<dbReference type="PaxDb" id="511145-b4107"/>
<dbReference type="EnsemblBacteria" id="AAC77068">
    <property type="protein sequence ID" value="AAC77068"/>
    <property type="gene ID" value="b4107"/>
</dbReference>
<dbReference type="GeneID" id="948622"/>
<dbReference type="KEGG" id="ecj:JW4068"/>
<dbReference type="KEGG" id="eco:b4107"/>
<dbReference type="PATRIC" id="fig|511145.12.peg.4235"/>
<dbReference type="EchoBASE" id="EB0706"/>
<dbReference type="eggNOG" id="COG2764">
    <property type="taxonomic scope" value="Bacteria"/>
</dbReference>
<dbReference type="HOGENOM" id="CLU_046006_17_1_6"/>
<dbReference type="InParanoid" id="P16681"/>
<dbReference type="OMA" id="LEKQMWG"/>
<dbReference type="PhylomeDB" id="P16681"/>
<dbReference type="BioCyc" id="EcoCyc:EG10712-MONOMER"/>
<dbReference type="PRO" id="PR:P16681"/>
<dbReference type="Proteomes" id="UP000000625">
    <property type="component" value="Chromosome"/>
</dbReference>
<dbReference type="CDD" id="cd06588">
    <property type="entry name" value="PhnB_like"/>
    <property type="match status" value="1"/>
</dbReference>
<dbReference type="Gene3D" id="3.10.180.10">
    <property type="entry name" value="2,3-Dihydroxybiphenyl 1,2-Dioxygenase, domain 1"/>
    <property type="match status" value="1"/>
</dbReference>
<dbReference type="InterPro" id="IPR029068">
    <property type="entry name" value="Glyas_Bleomycin-R_OHBP_Dase"/>
</dbReference>
<dbReference type="InterPro" id="IPR004360">
    <property type="entry name" value="Glyas_Fos-R_dOase_dom"/>
</dbReference>
<dbReference type="InterPro" id="IPR028973">
    <property type="entry name" value="PhnB-like"/>
</dbReference>
<dbReference type="NCBIfam" id="NF007537">
    <property type="entry name" value="PRK10148.1"/>
    <property type="match status" value="1"/>
</dbReference>
<dbReference type="PANTHER" id="PTHR33990:SF1">
    <property type="entry name" value="PROTEIN YJDN"/>
    <property type="match status" value="1"/>
</dbReference>
<dbReference type="PANTHER" id="PTHR33990">
    <property type="entry name" value="PROTEIN YJDN-RELATED"/>
    <property type="match status" value="1"/>
</dbReference>
<dbReference type="Pfam" id="PF00903">
    <property type="entry name" value="Glyoxalase"/>
    <property type="match status" value="1"/>
</dbReference>
<dbReference type="SUPFAM" id="SSF54593">
    <property type="entry name" value="Glyoxalase/Bleomycin resistance protein/Dihydroxybiphenyl dioxygenase"/>
    <property type="match status" value="1"/>
</dbReference>
<accession>P16681</accession>
<accession>Q2M6J7</accession>
<reference key="1">
    <citation type="journal article" date="1990" name="J. Biol. Chem.">
        <title>Molecular biology of carbon-phosphorus bond cleavage. Cloning and sequencing of the phn (psiD) genes involved in alkylphosphonate uptake and C-P lyase activity in Escherichia coli B.</title>
        <authorList>
            <person name="Chen C.-M."/>
            <person name="Ye Q.-Z."/>
            <person name="Zhu Z."/>
            <person name="Wanner B.L."/>
            <person name="Walsh C.T."/>
        </authorList>
    </citation>
    <scope>NUCLEOTIDE SEQUENCE [GENOMIC DNA]</scope>
    <source>
        <strain>B</strain>
    </source>
</reference>
<reference key="2">
    <citation type="journal article" date="1995" name="Nucleic Acids Res.">
        <title>Analysis of the Escherichia coli genome VI: DNA sequence of the region from 92.8 through 100 minutes.</title>
        <authorList>
            <person name="Burland V.D."/>
            <person name="Plunkett G. III"/>
            <person name="Sofia H.J."/>
            <person name="Daniels D.L."/>
            <person name="Blattner F.R."/>
        </authorList>
    </citation>
    <scope>NUCLEOTIDE SEQUENCE [LARGE SCALE GENOMIC DNA]</scope>
    <source>
        <strain>K12 / MG1655 / ATCC 47076</strain>
    </source>
</reference>
<reference key="3">
    <citation type="journal article" date="1997" name="Science">
        <title>The complete genome sequence of Escherichia coli K-12.</title>
        <authorList>
            <person name="Blattner F.R."/>
            <person name="Plunkett G. III"/>
            <person name="Bloch C.A."/>
            <person name="Perna N.T."/>
            <person name="Burland V."/>
            <person name="Riley M."/>
            <person name="Collado-Vides J."/>
            <person name="Glasner J.D."/>
            <person name="Rode C.K."/>
            <person name="Mayhew G.F."/>
            <person name="Gregor J."/>
            <person name="Davis N.W."/>
            <person name="Kirkpatrick H.A."/>
            <person name="Goeden M.A."/>
            <person name="Rose D.J."/>
            <person name="Mau B."/>
            <person name="Shao Y."/>
        </authorList>
    </citation>
    <scope>NUCLEOTIDE SEQUENCE [LARGE SCALE GENOMIC DNA]</scope>
    <source>
        <strain>K12 / MG1655 / ATCC 47076</strain>
    </source>
</reference>
<reference key="4">
    <citation type="journal article" date="2006" name="Mol. Syst. Biol.">
        <title>Highly accurate genome sequences of Escherichia coli K-12 strains MG1655 and W3110.</title>
        <authorList>
            <person name="Hayashi K."/>
            <person name="Morooka N."/>
            <person name="Yamamoto Y."/>
            <person name="Fujita K."/>
            <person name="Isono K."/>
            <person name="Choi S."/>
            <person name="Ohtsubo E."/>
            <person name="Baba T."/>
            <person name="Wanner B.L."/>
            <person name="Mori H."/>
            <person name="Horiuchi T."/>
        </authorList>
    </citation>
    <scope>NUCLEOTIDE SEQUENCE [LARGE SCALE GENOMIC DNA]</scope>
    <source>
        <strain>K12 / W3110 / ATCC 27325 / DSM 5911</strain>
    </source>
</reference>
<reference key="5">
    <citation type="journal article" date="1993" name="Gene">
        <title>Evidence for a fourteen-gene, phnC to phnP locus for phosphonate metabolism in Escherichia coli.</title>
        <authorList>
            <person name="Metcalf W.W."/>
            <person name="Wanner B.L."/>
        </authorList>
    </citation>
    <scope>DISRUPTION PHENOTYPE</scope>
    <source>
        <strain>B</strain>
    </source>
</reference>
<evidence type="ECO:0000269" key="1">
    <source>
    </source>
</evidence>
<evidence type="ECO:0000303" key="2">
    <source>
    </source>
</evidence>
<evidence type="ECO:0000305" key="3">
    <source>
    </source>
</evidence>
<protein>
    <recommendedName>
        <fullName>Protein YjdN</fullName>
    </recommendedName>
</protein>
<feature type="chain" id="PRO_0000058390" description="Protein YjdN">
    <location>
        <begin position="1"/>
        <end position="147"/>
    </location>
</feature>
<comment type="disruption phenotype">
    <text evidence="1">No effect on phosphonate metabolism in B strains.</text>
</comment>
<comment type="caution">
    <text evidence="3">Was originally thought to be involved in phosphonate metabolism.</text>
</comment>
<sequence>MPLSPYLSFAGNCSDAIAYYQRTLGAELLYKISFGEMPKSAQDSAENCPSGMQFPDTAIAHANVRIAGSDIMMSDAMPSGKASYSGFTLVLDSQQVEEGKRWFDNLAANGKIEMAWQETFWAHGFGKVTDKFGVPWMINVVKQQPTQ</sequence>
<proteinExistence type="predicted"/>
<name>YJDN_ECOLI</name>
<keyword id="KW-1185">Reference proteome</keyword>